<name>RSP14_CHLRE</name>
<sequence length="387" mass="40552">MDSQARIQANLRHIQAFEAKPNPKALPETAVTRGFEKVAFPKLVRELTCDNAVVRKKSLLAARELLSSPVNHVQCVAAGATPAIVALLQDQTDDETRYYAAGTLKLLAAKEVGARDLAQHSGLDALAAALEDPSEGVRDEAYGALIEAARFDSTRRALEACGSGAVLPRLMELALLEAQGGAAGRAQQGLVLLFTCTQARHNAGILSQLVDVAQAIPHLAGLLKPELPMPVRHAAAELLGALATREDAKIQAVQVGAVPLLLLAASPSVPVPFATSAVAALGAITIRREGKYAALESPGGLAGLVSVLDPCHEQLCINAMTAVSNVAEAPEARAILVASGAGPKLQHIFETATVEVVKRAAAQAIRQCRFKHLPYEVLPGAPPINEE</sequence>
<accession>A8HNV0</accession>
<protein>
    <recommendedName>
        <fullName>Radial spoke protein 14</fullName>
    </recommendedName>
    <alternativeName>
        <fullName evidence="3">Flagellar-associated protein 132</fullName>
    </alternativeName>
</protein>
<evidence type="ECO:0000255" key="1"/>
<evidence type="ECO:0000269" key="2">
    <source>
    </source>
</evidence>
<evidence type="ECO:0000303" key="3">
    <source>
    </source>
</evidence>
<evidence type="ECO:0000305" key="4"/>
<evidence type="ECO:0000312" key="5">
    <source>
        <dbReference type="EMBL" id="EDP10020.1"/>
    </source>
</evidence>
<evidence type="ECO:0007829" key="6">
    <source>
        <dbReference type="PDB" id="7JTK"/>
    </source>
</evidence>
<organism>
    <name type="scientific">Chlamydomonas reinhardtii</name>
    <name type="common">Chlamydomonas smithii</name>
    <dbReference type="NCBI Taxonomy" id="3055"/>
    <lineage>
        <taxon>Eukaryota</taxon>
        <taxon>Viridiplantae</taxon>
        <taxon>Chlorophyta</taxon>
        <taxon>core chlorophytes</taxon>
        <taxon>Chlorophyceae</taxon>
        <taxon>CS clade</taxon>
        <taxon>Chlamydomonadales</taxon>
        <taxon>Chlamydomonadaceae</taxon>
        <taxon>Chlamydomonas</taxon>
    </lineage>
</organism>
<comment type="subcellular location">
    <subcellularLocation>
        <location>Cytoplasm</location>
    </subcellularLocation>
    <subcellularLocation>
        <location>Cytoplasm</location>
        <location>Cytoskeleton</location>
    </subcellularLocation>
    <subcellularLocation>
        <location evidence="2">Cytoplasm</location>
        <location evidence="2">Cytoskeleton</location>
        <location evidence="2">Flagellum axoneme</location>
    </subcellularLocation>
    <text evidence="2">Radial spoke.</text>
</comment>
<comment type="similarity">
    <text evidence="4">Belongs to the flagellar radial spoke RSP14 family.</text>
</comment>
<feature type="chain" id="PRO_0000432960" description="Radial spoke protein 14">
    <location>
        <begin position="1"/>
        <end position="387"/>
    </location>
</feature>
<feature type="repeat" description="ARM 1" evidence="1">
    <location>
        <begin position="24"/>
        <end position="67"/>
    </location>
</feature>
<feature type="repeat" description="ARM 2" evidence="1">
    <location>
        <begin position="69"/>
        <end position="109"/>
    </location>
</feature>
<feature type="repeat" description="ARM 3" evidence="1">
    <location>
        <begin position="111"/>
        <end position="150"/>
    </location>
</feature>
<feature type="repeat" description="ARM 4" evidence="1">
    <location>
        <begin position="154"/>
        <end position="198"/>
    </location>
</feature>
<feature type="repeat" description="ARM 5" evidence="1">
    <location>
        <begin position="204"/>
        <end position="244"/>
    </location>
</feature>
<feature type="repeat" description="ARM 6" evidence="1">
    <location>
        <begin position="245"/>
        <end position="286"/>
    </location>
</feature>
<feature type="repeat" description="ARM 7" evidence="1">
    <location>
        <begin position="289"/>
        <end position="328"/>
    </location>
</feature>
<feature type="repeat" description="ARM 8" evidence="1">
    <location>
        <begin position="330"/>
        <end position="370"/>
    </location>
</feature>
<feature type="helix" evidence="6">
    <location>
        <begin position="3"/>
        <end position="16"/>
    </location>
</feature>
<feature type="helix" evidence="6">
    <location>
        <begin position="36"/>
        <end position="38"/>
    </location>
</feature>
<feature type="helix" evidence="6">
    <location>
        <begin position="39"/>
        <end position="46"/>
    </location>
</feature>
<feature type="helix" evidence="6">
    <location>
        <begin position="52"/>
        <end position="65"/>
    </location>
</feature>
<feature type="helix" evidence="6">
    <location>
        <begin position="69"/>
        <end position="77"/>
    </location>
</feature>
<feature type="helix" evidence="6">
    <location>
        <begin position="81"/>
        <end position="89"/>
    </location>
</feature>
<feature type="helix" evidence="6">
    <location>
        <begin position="94"/>
        <end position="107"/>
    </location>
</feature>
<feature type="helix" evidence="6">
    <location>
        <begin position="111"/>
        <end position="119"/>
    </location>
</feature>
<feature type="helix" evidence="6">
    <location>
        <begin position="122"/>
        <end position="129"/>
    </location>
</feature>
<feature type="strand" evidence="6">
    <location>
        <begin position="133"/>
        <end position="135"/>
    </location>
</feature>
<feature type="helix" evidence="6">
    <location>
        <begin position="136"/>
        <end position="148"/>
    </location>
</feature>
<feature type="helix" evidence="6">
    <location>
        <begin position="152"/>
        <end position="159"/>
    </location>
</feature>
<feature type="strand" evidence="6">
    <location>
        <begin position="161"/>
        <end position="163"/>
    </location>
</feature>
<feature type="helix" evidence="6">
    <location>
        <begin position="166"/>
        <end position="178"/>
    </location>
</feature>
<feature type="helix" evidence="6">
    <location>
        <begin position="183"/>
        <end position="197"/>
    </location>
</feature>
<feature type="strand" evidence="6">
    <location>
        <begin position="199"/>
        <end position="201"/>
    </location>
</feature>
<feature type="helix" evidence="6">
    <location>
        <begin position="203"/>
        <end position="213"/>
    </location>
</feature>
<feature type="helix" evidence="6">
    <location>
        <begin position="215"/>
        <end position="221"/>
    </location>
</feature>
<feature type="helix" evidence="6">
    <location>
        <begin position="229"/>
        <end position="242"/>
    </location>
</feature>
<feature type="helix" evidence="6">
    <location>
        <begin position="246"/>
        <end position="255"/>
    </location>
</feature>
<feature type="helix" evidence="6">
    <location>
        <begin position="258"/>
        <end position="263"/>
    </location>
</feature>
<feature type="helix" evidence="6">
    <location>
        <begin position="271"/>
        <end position="284"/>
    </location>
</feature>
<feature type="helix" evidence="6">
    <location>
        <begin position="288"/>
        <end position="296"/>
    </location>
</feature>
<feature type="helix" evidence="6">
    <location>
        <begin position="300"/>
        <end position="307"/>
    </location>
</feature>
<feature type="strand" evidence="6">
    <location>
        <begin position="310"/>
        <end position="312"/>
    </location>
</feature>
<feature type="helix" evidence="6">
    <location>
        <begin position="313"/>
        <end position="326"/>
    </location>
</feature>
<feature type="helix" evidence="6">
    <location>
        <begin position="332"/>
        <end position="338"/>
    </location>
</feature>
<feature type="helix" evidence="6">
    <location>
        <begin position="341"/>
        <end position="351"/>
    </location>
</feature>
<feature type="helix" evidence="6">
    <location>
        <begin position="355"/>
        <end position="368"/>
    </location>
</feature>
<feature type="strand" evidence="6">
    <location>
        <begin position="372"/>
        <end position="374"/>
    </location>
</feature>
<proteinExistence type="evidence at protein level"/>
<dbReference type="EMBL" id="DS496108">
    <property type="protein sequence ID" value="EDP10020.1"/>
    <property type="molecule type" value="Genomic_DNA"/>
</dbReference>
<dbReference type="RefSeq" id="XP_001690282.1">
    <property type="nucleotide sequence ID" value="XM_001690230.1"/>
</dbReference>
<dbReference type="PDB" id="7JTK">
    <property type="method" value="EM"/>
    <property type="resolution" value="3.20 A"/>
    <property type="chains" value="X=1-387"/>
</dbReference>
<dbReference type="PDB" id="8GLV">
    <property type="method" value="EM"/>
    <property type="resolution" value="3.10 A"/>
    <property type="chains" value="IT=1-387"/>
</dbReference>
<dbReference type="PDBsum" id="7JTK"/>
<dbReference type="PDBsum" id="8GLV"/>
<dbReference type="EMDB" id="EMD-22475"/>
<dbReference type="EMDB" id="EMD-40220"/>
<dbReference type="SMR" id="A8HNV0"/>
<dbReference type="PaxDb" id="3055-EDP10020"/>
<dbReference type="EnsemblPlants" id="PNW73066">
    <property type="protein sequence ID" value="PNW73066"/>
    <property type="gene ID" value="CHLRE_14g617500v5"/>
</dbReference>
<dbReference type="GeneID" id="5715835"/>
<dbReference type="Gramene" id="PNW73066">
    <property type="protein sequence ID" value="PNW73066"/>
    <property type="gene ID" value="CHLRE_14g617500v5"/>
</dbReference>
<dbReference type="KEGG" id="cre:CHLRE_14g617500v5"/>
<dbReference type="eggNOG" id="KOG0167">
    <property type="taxonomic scope" value="Eukaryota"/>
</dbReference>
<dbReference type="HOGENOM" id="CLU_714469_0_0_1"/>
<dbReference type="OrthoDB" id="409644at2759"/>
<dbReference type="GO" id="GO:0005737">
    <property type="term" value="C:cytoplasm"/>
    <property type="evidence" value="ECO:0007669"/>
    <property type="project" value="UniProtKB-SubCell"/>
</dbReference>
<dbReference type="GO" id="GO:0005856">
    <property type="term" value="C:cytoskeleton"/>
    <property type="evidence" value="ECO:0007669"/>
    <property type="project" value="UniProtKB-SubCell"/>
</dbReference>
<dbReference type="GO" id="GO:0031514">
    <property type="term" value="C:motile cilium"/>
    <property type="evidence" value="ECO:0007669"/>
    <property type="project" value="UniProtKB-KW"/>
</dbReference>
<dbReference type="Gene3D" id="1.25.10.10">
    <property type="entry name" value="Leucine-rich Repeat Variant"/>
    <property type="match status" value="2"/>
</dbReference>
<dbReference type="InterPro" id="IPR011989">
    <property type="entry name" value="ARM-like"/>
</dbReference>
<dbReference type="InterPro" id="IPR016024">
    <property type="entry name" value="ARM-type_fold"/>
</dbReference>
<dbReference type="InterPro" id="IPR000225">
    <property type="entry name" value="Armadillo"/>
</dbReference>
<dbReference type="InterPro" id="IPR042856">
    <property type="entry name" value="RSP14"/>
</dbReference>
<dbReference type="PANTHER" id="PTHR15599:SF1">
    <property type="entry name" value="RADIAL SPOKE HEAD 14 HOMOLOG"/>
    <property type="match status" value="1"/>
</dbReference>
<dbReference type="PANTHER" id="PTHR15599">
    <property type="entry name" value="RTDR1"/>
    <property type="match status" value="1"/>
</dbReference>
<dbReference type="SMART" id="SM00185">
    <property type="entry name" value="ARM"/>
    <property type="match status" value="6"/>
</dbReference>
<dbReference type="SUPFAM" id="SSF48371">
    <property type="entry name" value="ARM repeat"/>
    <property type="match status" value="1"/>
</dbReference>
<dbReference type="PROSITE" id="PS50176">
    <property type="entry name" value="ARM_REPEAT"/>
    <property type="match status" value="1"/>
</dbReference>
<gene>
    <name type="primary">RSP14</name>
    <name evidence="3" type="synonym">FAP132</name>
    <name evidence="5" type="ORF">CHLREDRAFT_172252</name>
</gene>
<reference key="1">
    <citation type="journal article" date="2007" name="Science">
        <title>The Chlamydomonas genome reveals the evolution of key animal and plant functions.</title>
        <authorList>
            <person name="Merchant S.S."/>
            <person name="Prochnik S.E."/>
            <person name="Vallon O."/>
            <person name="Harris E.H."/>
            <person name="Karpowicz S.J."/>
            <person name="Witman G.B."/>
            <person name="Terry A."/>
            <person name="Salamov A."/>
            <person name="Fritz-Laylin L.K."/>
            <person name="Marechal-Drouard L."/>
            <person name="Marshall W.F."/>
            <person name="Qu L.H."/>
            <person name="Nelson D.R."/>
            <person name="Sanderfoot A.A."/>
            <person name="Spalding M.H."/>
            <person name="Kapitonov V.V."/>
            <person name="Ren Q."/>
            <person name="Ferris P."/>
            <person name="Lindquist E."/>
            <person name="Shapiro H."/>
            <person name="Lucas S.M."/>
            <person name="Grimwood J."/>
            <person name="Schmutz J."/>
            <person name="Cardol P."/>
            <person name="Cerutti H."/>
            <person name="Chanfreau G."/>
            <person name="Chen C.L."/>
            <person name="Cognat V."/>
            <person name="Croft M.T."/>
            <person name="Dent R."/>
            <person name="Dutcher S."/>
            <person name="Fernandez E."/>
            <person name="Fukuzawa H."/>
            <person name="Gonzalez-Ballester D."/>
            <person name="Gonzalez-Halphen D."/>
            <person name="Hallmann A."/>
            <person name="Hanikenne M."/>
            <person name="Hippler M."/>
            <person name="Inwood W."/>
            <person name="Jabbari K."/>
            <person name="Kalanon M."/>
            <person name="Kuras R."/>
            <person name="Lefebvre P.A."/>
            <person name="Lemaire S.D."/>
            <person name="Lobanov A.V."/>
            <person name="Lohr M."/>
            <person name="Manuell A."/>
            <person name="Meier I."/>
            <person name="Mets L."/>
            <person name="Mittag M."/>
            <person name="Mittelmeier T."/>
            <person name="Moroney J.V."/>
            <person name="Moseley J."/>
            <person name="Napoli C."/>
            <person name="Nedelcu A.M."/>
            <person name="Niyogi K."/>
            <person name="Novoselov S.V."/>
            <person name="Paulsen I.T."/>
            <person name="Pazour G.J."/>
            <person name="Purton S."/>
            <person name="Ral J.P."/>
            <person name="Riano-Pachon D.M."/>
            <person name="Riekhof W."/>
            <person name="Rymarquis L."/>
            <person name="Schroda M."/>
            <person name="Stern D."/>
            <person name="Umen J."/>
            <person name="Willows R."/>
            <person name="Wilson N."/>
            <person name="Zimmer S.L."/>
            <person name="Allmer J."/>
            <person name="Balk J."/>
            <person name="Bisova K."/>
            <person name="Chen C.J."/>
            <person name="Elias M."/>
            <person name="Gendler K."/>
            <person name="Hauser C."/>
            <person name="Lamb M.R."/>
            <person name="Ledford H."/>
            <person name="Long J.C."/>
            <person name="Minagawa J."/>
            <person name="Page M.D."/>
            <person name="Pan J."/>
            <person name="Pootakham W."/>
            <person name="Roje S."/>
            <person name="Rose A."/>
            <person name="Stahlberg E."/>
            <person name="Terauchi A.M."/>
            <person name="Yang P."/>
            <person name="Ball S."/>
            <person name="Bowler C."/>
            <person name="Dieckmann C.L."/>
            <person name="Gladyshev V.N."/>
            <person name="Green P."/>
            <person name="Jorgensen R."/>
            <person name="Mayfield S."/>
            <person name="Mueller-Roeber B."/>
            <person name="Rajamani S."/>
            <person name="Sayre R.T."/>
            <person name="Brokstein P."/>
            <person name="Dubchak I."/>
            <person name="Goodstein D."/>
            <person name="Hornick L."/>
            <person name="Huang Y.W."/>
            <person name="Jhaveri J."/>
            <person name="Luo Y."/>
            <person name="Martinez D."/>
            <person name="Ngau W.C."/>
            <person name="Otillar B."/>
            <person name="Poliakov A."/>
            <person name="Porter A."/>
            <person name="Szajkowski L."/>
            <person name="Werner G."/>
            <person name="Zhou K."/>
            <person name="Grigoriev I.V."/>
            <person name="Rokhsar D.S."/>
            <person name="Grossman A.R."/>
        </authorList>
    </citation>
    <scope>NUCLEOTIDE SEQUENCE [LARGE SCALE GENOMIC DNA]</scope>
    <source>
        <strain>CC-503</strain>
    </source>
</reference>
<reference key="2">
    <citation type="journal article" date="2005" name="J. Cell Biol.">
        <title>Proteomic analysis of a eukaryotic cilium.</title>
        <authorList>
            <person name="Pazour G.J."/>
            <person name="Agrin N."/>
            <person name="Leszyk J."/>
            <person name="Witman G.B."/>
        </authorList>
    </citation>
    <scope>IDENTIFICATION BY MASS SPECTROMETRY</scope>
</reference>
<reference key="3">
    <citation type="journal article" date="2006" name="J. Cell Sci.">
        <title>Radial spoke proteins of Chlamydomonas flagella.</title>
        <authorList>
            <person name="Yang P."/>
            <person name="Diener D.R."/>
            <person name="Yang C."/>
            <person name="Kohno T."/>
            <person name="Pazour G.J."/>
            <person name="Dienes J.M."/>
            <person name="Agrin N.S."/>
            <person name="King S.M."/>
            <person name="Sale W.S."/>
            <person name="Kamiya R."/>
            <person name="Rosenbaum J.L."/>
            <person name="Witman G.B."/>
        </authorList>
    </citation>
    <scope>IDENTIFICATION BY MASS SPECTROMETRY</scope>
    <scope>SUBCELLULAR LOCATION</scope>
</reference>
<keyword id="KW-0002">3D-structure</keyword>
<keyword id="KW-0966">Cell projection</keyword>
<keyword id="KW-0969">Cilium</keyword>
<keyword id="KW-0963">Cytoplasm</keyword>
<keyword id="KW-0206">Cytoskeleton</keyword>
<keyword id="KW-0282">Flagellum</keyword>
<keyword id="KW-0677">Repeat</keyword>